<proteinExistence type="inferred from homology"/>
<gene>
    <name type="primary">OAF3</name>
    <name type="ORF">SCY_3434</name>
</gene>
<name>OAF3_YEAS7</name>
<reference key="1">
    <citation type="journal article" date="2007" name="Proc. Natl. Acad. Sci. U.S.A.">
        <title>Genome sequencing and comparative analysis of Saccharomyces cerevisiae strain YJM789.</title>
        <authorList>
            <person name="Wei W."/>
            <person name="McCusker J.H."/>
            <person name="Hyman R.W."/>
            <person name="Jones T."/>
            <person name="Ning Y."/>
            <person name="Cao Z."/>
            <person name="Gu Z."/>
            <person name="Bruno D."/>
            <person name="Miranda M."/>
            <person name="Nguyen M."/>
            <person name="Wilhelmy J."/>
            <person name="Komp C."/>
            <person name="Tamse R."/>
            <person name="Wang X."/>
            <person name="Jia P."/>
            <person name="Luedi P."/>
            <person name="Oefner P.J."/>
            <person name="David L."/>
            <person name="Dietrich F.S."/>
            <person name="Li Y."/>
            <person name="Davis R.W."/>
            <person name="Steinmetz L.M."/>
        </authorList>
    </citation>
    <scope>NUCLEOTIDE SEQUENCE [LARGE SCALE GENOMIC DNA]</scope>
    <source>
        <strain>YJM789</strain>
    </source>
</reference>
<feature type="chain" id="PRO_0000409045" description="Oleate activated transcription factor 3">
    <location>
        <begin position="1"/>
        <end position="863"/>
    </location>
</feature>
<feature type="DNA-binding region" description="Zn(2)-C6 fungal-type" evidence="2">
    <location>
        <begin position="19"/>
        <end position="47"/>
    </location>
</feature>
<feature type="region of interest" description="Disordered" evidence="3">
    <location>
        <begin position="52"/>
        <end position="99"/>
    </location>
</feature>
<feature type="compositionally biased region" description="Polar residues" evidence="3">
    <location>
        <begin position="52"/>
        <end position="63"/>
    </location>
</feature>
<sequence length="863" mass="101887">MGYDSQVRTKKRHRITVVCTNCKKRKSKCDRTKPCGTCVRLGDVDSCVYLTDSSGQPESSPSLNDADPLRKQSTPAERISPGFIKKRRSSQTRQDEDHWQRVRELENQSSLYYLPIHEETPFFIDLIPSGFYLETKRSADNLFGLFTDRAIENRDPYLQTMVTFRSIAIKKMMDKLGSNGNNVKNGSLPKSFEALSTFDADDERHISDDVVDKGNNFRMHQTIHKSLFNKFAQYRENNAKKFSSETILAKDYLPPLKILESEVLALFEEKIYNMIPIFDMKILRHEITIFYQNIVEKGNPVSIKHYDHMVFCIILLIIKICRLSVQFSKLTPYIYPVLQEIDTSKFLALVKHYLFETKVLRKCNLLQLQCLILLRFLHWCAPEDGDGPETQYCQILMGTIISSCKEMGINWYCFSHPEKYSFKINRHTRPSYDIMKPSDYISVFRKIWSYVLFWDRKMCFISGEECQIGKTLQCHFKEEADTPTWYIRMLTLDNLMKKINDTLNDDPGKVDLNLLHRLINDLKRNFHILKSLSKNEKETMRHFDFEMEWIIDLFSLSLLHGEMIFYEYDCNITKFYKSFQDLWDMVIHISEKCYNYFFNSDALEVDSLTKFYTNRIVEIVANKVLVIVPAFILRGDRFKTIQYADKKKMIEFLYGVSSVYFNEFGFEYYRCFRKMFTAKIAYKILNRSCEKNAWRIILKFLLNELKLEDNGDSYIDYNDMRLKDICPIILEFQETVQKYDGYRPDILSIWNNEFYPIGKYNDDMTGFKFQMRIKEMQEFLDMEKYSDRFNIFSSFYDHASSQLAKHTEVDTNISITNEQVAETPQKELLQQPLAPALPVNDLIVSEFDVIEDIFDPVDFVSFF</sequence>
<comment type="function">
    <text evidence="1">Transcriptional inhibitor with a significantly increased number of target genes in response to oleate.</text>
</comment>
<comment type="subcellular location">
    <subcellularLocation>
        <location evidence="1">Cytoplasm</location>
    </subcellularLocation>
    <subcellularLocation>
        <location evidence="2">Nucleus</location>
    </subcellularLocation>
    <subcellularLocation>
        <location evidence="1">Mitochondrion</location>
    </subcellularLocation>
</comment>
<comment type="similarity">
    <text evidence="4">Belongs to the OAF3 family.</text>
</comment>
<evidence type="ECO:0000250" key="1"/>
<evidence type="ECO:0000255" key="2">
    <source>
        <dbReference type="PROSITE-ProRule" id="PRU00227"/>
    </source>
</evidence>
<evidence type="ECO:0000256" key="3">
    <source>
        <dbReference type="SAM" id="MobiDB-lite"/>
    </source>
</evidence>
<evidence type="ECO:0000305" key="4"/>
<dbReference type="EMBL" id="AAFW02000152">
    <property type="protein sequence ID" value="EDN59967.1"/>
    <property type="molecule type" value="Genomic_DNA"/>
</dbReference>
<dbReference type="HOGENOM" id="CLU_018684_0_0_1"/>
<dbReference type="OrthoDB" id="19060at4893"/>
<dbReference type="Proteomes" id="UP000007060">
    <property type="component" value="Unassembled WGS sequence"/>
</dbReference>
<dbReference type="GO" id="GO:0005739">
    <property type="term" value="C:mitochondrion"/>
    <property type="evidence" value="ECO:0007669"/>
    <property type="project" value="UniProtKB-SubCell"/>
</dbReference>
<dbReference type="GO" id="GO:0005634">
    <property type="term" value="C:nucleus"/>
    <property type="evidence" value="ECO:0007669"/>
    <property type="project" value="UniProtKB-SubCell"/>
</dbReference>
<dbReference type="GO" id="GO:0000981">
    <property type="term" value="F:DNA-binding transcription factor activity, RNA polymerase II-specific"/>
    <property type="evidence" value="ECO:0007669"/>
    <property type="project" value="InterPro"/>
</dbReference>
<dbReference type="GO" id="GO:0000978">
    <property type="term" value="F:RNA polymerase II cis-regulatory region sequence-specific DNA binding"/>
    <property type="evidence" value="ECO:0007669"/>
    <property type="project" value="TreeGrafter"/>
</dbReference>
<dbReference type="GO" id="GO:0008270">
    <property type="term" value="F:zinc ion binding"/>
    <property type="evidence" value="ECO:0007669"/>
    <property type="project" value="InterPro"/>
</dbReference>
<dbReference type="GO" id="GO:0045944">
    <property type="term" value="P:positive regulation of transcription by RNA polymerase II"/>
    <property type="evidence" value="ECO:0007669"/>
    <property type="project" value="TreeGrafter"/>
</dbReference>
<dbReference type="CDD" id="cd00067">
    <property type="entry name" value="GAL4"/>
    <property type="match status" value="1"/>
</dbReference>
<dbReference type="Gene3D" id="4.10.240.10">
    <property type="entry name" value="Zn(2)-C6 fungal-type DNA-binding domain"/>
    <property type="match status" value="1"/>
</dbReference>
<dbReference type="InterPro" id="IPR050675">
    <property type="entry name" value="OAF3"/>
</dbReference>
<dbReference type="InterPro" id="IPR036864">
    <property type="entry name" value="Zn2-C6_fun-type_DNA-bd_sf"/>
</dbReference>
<dbReference type="InterPro" id="IPR001138">
    <property type="entry name" value="Zn2Cys6_DnaBD"/>
</dbReference>
<dbReference type="PANTHER" id="PTHR31069:SF33">
    <property type="entry name" value="OLEATE ACTIVATED TRANSCRIPTION FACTOR 3"/>
    <property type="match status" value="1"/>
</dbReference>
<dbReference type="PANTHER" id="PTHR31069">
    <property type="entry name" value="OLEATE-ACTIVATED TRANSCRIPTION FACTOR 1-RELATED"/>
    <property type="match status" value="1"/>
</dbReference>
<dbReference type="Pfam" id="PF00172">
    <property type="entry name" value="Zn_clus"/>
    <property type="match status" value="1"/>
</dbReference>
<dbReference type="SMART" id="SM00066">
    <property type="entry name" value="GAL4"/>
    <property type="match status" value="1"/>
</dbReference>
<dbReference type="SUPFAM" id="SSF57701">
    <property type="entry name" value="Zn2/Cys6 DNA-binding domain"/>
    <property type="match status" value="1"/>
</dbReference>
<dbReference type="PROSITE" id="PS00463">
    <property type="entry name" value="ZN2_CY6_FUNGAL_1"/>
    <property type="match status" value="1"/>
</dbReference>
<dbReference type="PROSITE" id="PS50048">
    <property type="entry name" value="ZN2_CY6_FUNGAL_2"/>
    <property type="match status" value="1"/>
</dbReference>
<protein>
    <recommendedName>
        <fullName>Oleate activated transcription factor 3</fullName>
    </recommendedName>
</protein>
<keyword id="KW-0963">Cytoplasm</keyword>
<keyword id="KW-0238">DNA-binding</keyword>
<keyword id="KW-0479">Metal-binding</keyword>
<keyword id="KW-0496">Mitochondrion</keyword>
<keyword id="KW-0539">Nucleus</keyword>
<keyword id="KW-0678">Repressor</keyword>
<keyword id="KW-0804">Transcription</keyword>
<keyword id="KW-0805">Transcription regulation</keyword>
<keyword id="KW-0862">Zinc</keyword>
<organism>
    <name type="scientific">Saccharomyces cerevisiae (strain YJM789)</name>
    <name type="common">Baker's yeast</name>
    <dbReference type="NCBI Taxonomy" id="307796"/>
    <lineage>
        <taxon>Eukaryota</taxon>
        <taxon>Fungi</taxon>
        <taxon>Dikarya</taxon>
        <taxon>Ascomycota</taxon>
        <taxon>Saccharomycotina</taxon>
        <taxon>Saccharomycetes</taxon>
        <taxon>Saccharomycetales</taxon>
        <taxon>Saccharomycetaceae</taxon>
        <taxon>Saccharomyces</taxon>
    </lineage>
</organism>
<accession>A7A024</accession>